<feature type="signal peptide" evidence="2">
    <location>
        <begin position="1"/>
        <end position="23"/>
    </location>
</feature>
<feature type="chain" id="PRO_5010147867" description="LRR receptor-like serine/threonine-protein kinase IOS1">
    <location>
        <begin position="24"/>
        <end position="894"/>
    </location>
</feature>
<feature type="topological domain" description="Extracellular" evidence="9">
    <location>
        <begin position="24"/>
        <end position="515"/>
    </location>
</feature>
<feature type="transmembrane region" description="Helical" evidence="2">
    <location>
        <begin position="516"/>
        <end position="536"/>
    </location>
</feature>
<feature type="topological domain" description="Cytoplasmic" evidence="9">
    <location>
        <begin position="537"/>
        <end position="894"/>
    </location>
</feature>
<feature type="repeat" description="LRR 1" evidence="2">
    <location>
        <begin position="431"/>
        <end position="457"/>
    </location>
</feature>
<feature type="repeat" description="LRR 2" evidence="2">
    <location>
        <begin position="459"/>
        <end position="479"/>
    </location>
</feature>
<feature type="domain" description="Protein kinase" evidence="3">
    <location>
        <begin position="586"/>
        <end position="858"/>
    </location>
</feature>
<feature type="active site" description="Proton acceptor" evidence="3">
    <location>
        <position position="710"/>
    </location>
</feature>
<feature type="binding site" evidence="3">
    <location>
        <begin position="592"/>
        <end position="600"/>
    </location>
    <ligand>
        <name>ATP</name>
        <dbReference type="ChEBI" id="CHEBI:30616"/>
    </ligand>
</feature>
<feature type="binding site" evidence="3">
    <location>
        <position position="613"/>
    </location>
    <ligand>
        <name>ATP</name>
        <dbReference type="ChEBI" id="CHEBI:30616"/>
    </ligand>
</feature>
<feature type="modified residue" description="Phosphothreonine" evidence="1">
    <location>
        <position position="577"/>
    </location>
</feature>
<feature type="modified residue" description="Phosphotyrosine" evidence="1">
    <location>
        <position position="658"/>
    </location>
</feature>
<feature type="modified residue" description="Phosphoserine" evidence="1">
    <location>
        <position position="744"/>
    </location>
</feature>
<feature type="modified residue" description="Phosphothreonine" evidence="1">
    <location>
        <position position="745"/>
    </location>
</feature>
<feature type="modified residue" description="Phosphothreonine" evidence="1">
    <location>
        <position position="750"/>
    </location>
</feature>
<feature type="modified residue" description="Phosphotyrosine" evidence="1">
    <location>
        <position position="758"/>
    </location>
</feature>
<feature type="glycosylation site" description="N-linked (GlcNAc...) asparagine" evidence="4">
    <location>
        <position position="48"/>
    </location>
</feature>
<feature type="glycosylation site" description="N-linked (GlcNAc...) asparagine" evidence="4">
    <location>
        <position position="95"/>
    </location>
</feature>
<feature type="glycosylation site" description="N-linked (GlcNAc...) asparagine" evidence="4">
    <location>
        <position position="137"/>
    </location>
</feature>
<feature type="glycosylation site" description="N-linked (GlcNAc...) asparagine" evidence="4">
    <location>
        <position position="179"/>
    </location>
</feature>
<feature type="glycosylation site" description="N-linked (GlcNAc...) asparagine" evidence="4">
    <location>
        <position position="223"/>
    </location>
</feature>
<feature type="glycosylation site" description="N-linked (GlcNAc...) asparagine" evidence="4">
    <location>
        <position position="230"/>
    </location>
</feature>
<feature type="glycosylation site" description="N-linked (GlcNAc...) asparagine" evidence="4">
    <location>
        <position position="260"/>
    </location>
</feature>
<feature type="glycosylation site" description="N-linked (GlcNAc...) asparagine" evidence="4">
    <location>
        <position position="287"/>
    </location>
</feature>
<feature type="glycosylation site" description="N-linked (GlcNAc...) asparagine" evidence="4">
    <location>
        <position position="309"/>
    </location>
</feature>
<feature type="glycosylation site" description="N-linked (GlcNAc...) asparagine" evidence="4">
    <location>
        <position position="338"/>
    </location>
</feature>
<feature type="glycosylation site" description="N-linked (GlcNAc...) asparagine" evidence="4">
    <location>
        <position position="399"/>
    </location>
</feature>
<feature type="glycosylation site" description="N-linked (GlcNAc...) asparagine" evidence="4">
    <location>
        <position position="441"/>
    </location>
</feature>
<feature type="glycosylation site" description="N-linked (GlcNAc...) asparagine" evidence="4">
    <location>
        <position position="462"/>
    </location>
</feature>
<feature type="glycosylation site" description="N-linked (GlcNAc...) asparagine" evidence="4">
    <location>
        <position position="469"/>
    </location>
</feature>
<feature type="sequence conflict" description="In Ref. 4; BAC43425." evidence="9" ref="4">
    <original>S</original>
    <variation>N</variation>
    <location>
        <position position="83"/>
    </location>
</feature>
<keyword id="KW-0938">Abscisic acid signaling pathway</keyword>
<keyword id="KW-0067">ATP-binding</keyword>
<keyword id="KW-1003">Cell membrane</keyword>
<keyword id="KW-0325">Glycoprotein</keyword>
<keyword id="KW-0418">Kinase</keyword>
<keyword id="KW-0433">Leucine-rich repeat</keyword>
<keyword id="KW-0472">Membrane</keyword>
<keyword id="KW-0547">Nucleotide-binding</keyword>
<keyword id="KW-0597">Phosphoprotein</keyword>
<keyword id="KW-0611">Plant defense</keyword>
<keyword id="KW-0675">Receptor</keyword>
<keyword id="KW-1185">Reference proteome</keyword>
<keyword id="KW-0677">Repeat</keyword>
<keyword id="KW-0723">Serine/threonine-protein kinase</keyword>
<keyword id="KW-0732">Signal</keyword>
<keyword id="KW-0808">Transferase</keyword>
<keyword id="KW-0812">Transmembrane</keyword>
<keyword id="KW-1133">Transmembrane helix</keyword>
<evidence type="ECO:0000250" key="1">
    <source>
        <dbReference type="UniProtKB" id="O48814"/>
    </source>
</evidence>
<evidence type="ECO:0000255" key="2"/>
<evidence type="ECO:0000255" key="3">
    <source>
        <dbReference type="PROSITE-ProRule" id="PRU00159"/>
    </source>
</evidence>
<evidence type="ECO:0000255" key="4">
    <source>
        <dbReference type="PROSITE-ProRule" id="PRU00498"/>
    </source>
</evidence>
<evidence type="ECO:0000269" key="5">
    <source>
    </source>
</evidence>
<evidence type="ECO:0000269" key="6">
    <source>
    </source>
</evidence>
<evidence type="ECO:0000269" key="7">
    <source>
    </source>
</evidence>
<evidence type="ECO:0000303" key="8">
    <source>
    </source>
</evidence>
<evidence type="ECO:0000305" key="9"/>
<evidence type="ECO:0000312" key="10">
    <source>
        <dbReference type="Araport" id="AT1G51800"/>
    </source>
</evidence>
<evidence type="ECO:0000312" key="11">
    <source>
        <dbReference type="EMBL" id="AAG50874.1"/>
    </source>
</evidence>
<sequence>MAFSSCFLLVLLQIFSALLLCLAQDQSGFISLDCGSPRETSFREKTTNITYISDANFINTGVGGSIKQGYRTQFQQQTWNLRSFPQGIRNCYTLNLTIGDEYLIRANFLHGGYDDKPSTQFELYLGPNLWSTVTTTNETEASIFEMIHILTTDRLQICLVKTGNATPFISALELRKLMNTTYLTRQGSLQTFIRADVGATVNQGYRYGIDVFDRVWTPYNFGNWSQISTNQSVNINNDYQPPEIAMVTASVPTDPDAAMNISLVGVERTVQFYVFMHFAEIQELKSNDTREFNIMYNNKHIYGPFRPLNFTTSSVFTPTEVVADANGQYIFSLQRTGNSTLPPLLNAMEIYSVNLLPQQETDRKEVDAMMNIKSAYGVNKIDWEGDPCVPLDYKWSGVNCTYVDNETPKIISLDLSTSGLTGEILEFISDLTSLEVLDLSNNSLTGSVPEFLANMETLKLINLSGNELNGSIPATLLDKERRGSITLSIEGNTGLCSSTSCATTKKKKKNTVIAPVAASLVSVFLIGAGIVTFLILKRKKRTKLGLNPNSGTGTTPLHSRSHHGFEPPVIAKNRKLTYIDVVKITNNFERVLGRGGFGVVYYGVLNNEPVAVKMLTESTALGYKQFKAEVELLLRVHHKDLTCLVGYCEEGDKMSLIYEFMANGDLKEHLSGKRGPSILTWEGRLRIAAESAQGLEYLHNGCKPQIVHRDIKTTNILLNEKFQAKLADFGLSRSFPLGTETHVSTIVAGTPGYLDPEYYRTNWLTEKSDVFSFGVVLLELVTNQPVIDMKREKSHIAEWVGLMLSRGDINSIVDPKLQGDFDPNTIWKVVETAMTCLNPSSSRRPTMTQVVMDLKECLNMEMARNMGSRMTDSTNDSSIELSMNFTTELNPGAR</sequence>
<gene>
    <name evidence="8" type="primary">IOS1</name>
    <name evidence="10" type="ordered locus">At1g51800</name>
    <name evidence="11" type="ORF">F19C24.3</name>
</gene>
<organism>
    <name type="scientific">Arabidopsis thaliana</name>
    <name type="common">Mouse-ear cress</name>
    <dbReference type="NCBI Taxonomy" id="3702"/>
    <lineage>
        <taxon>Eukaryota</taxon>
        <taxon>Viridiplantae</taxon>
        <taxon>Streptophyta</taxon>
        <taxon>Embryophyta</taxon>
        <taxon>Tracheophyta</taxon>
        <taxon>Spermatophyta</taxon>
        <taxon>Magnoliopsida</taxon>
        <taxon>eudicotyledons</taxon>
        <taxon>Gunneridae</taxon>
        <taxon>Pentapetalae</taxon>
        <taxon>rosids</taxon>
        <taxon>malvids</taxon>
        <taxon>Brassicales</taxon>
        <taxon>Brassicaceae</taxon>
        <taxon>Camelineae</taxon>
        <taxon>Arabidopsis</taxon>
    </lineage>
</organism>
<comment type="function">
    <text evidence="5 6 7">Negatively regulates the abscisic acid (ABA) signaling pathway (PubMed:25274985). Required for full susceptibility to filamentous (hemi)biotrophic oomycetes (e.g. H.arabidopsidis and P.parasitica) and fungal (e.g. E.cruciferarum) pathogens, probably by triggering the repression of ABA-sensitive COLD REGULATED and RESISTANCE TO DESICCATION genes during infection, but independently of immune responses (PubMed:21711359, PubMed:25274985). Involved in BAK1-dependent and BAK1-independent microbe-associated molecular patterns (MAMPs)-triggered immunity (PTI) leading to defense responses, including callose deposition and MAPK cascade activation, toward pathogenic bacteria (e.g. P.syringae). Required for chitin-mediated PTI (PubMed:27317676).</text>
</comment>
<comment type="subunit">
    <text evidence="7">Homodimerization. Interacts with BAK1 and FLS2; triggers FLS2-BAK1 complex formation upon microbe-associated molecular patterns (MAMPs) treatment. Also binds to CERK1 and EFR.</text>
</comment>
<comment type="interaction">
    <interactant intactId="EBI-16924837">
        <id>Q9C8I6</id>
    </interactant>
    <interactant intactId="EBI-20651225">
        <id>C0LGI5</id>
        <label>At1g69990</label>
    </interactant>
    <organismsDiffer>false</organismsDiffer>
    <experiments>4</experiments>
</comment>
<comment type="interaction">
    <interactant intactId="EBI-16924837">
        <id>Q9C8I6</id>
    </interactant>
    <interactant intactId="EBI-16902452">
        <id>Q8VYT3</id>
        <label>At4g30520</label>
    </interactant>
    <organismsDiffer>false</organismsDiffer>
    <experiments>3</experiments>
</comment>
<comment type="interaction">
    <interactant intactId="EBI-16924837">
        <id>Q9C8I6</id>
    </interactant>
    <interactant intactId="EBI-6298290">
        <id>Q9ASS4</id>
        <label>At5g48380</label>
    </interactant>
    <organismsDiffer>false</organismsDiffer>
    <experiments>2</experiments>
</comment>
<comment type="interaction">
    <interactant intactId="EBI-16924837">
        <id>Q9C8I6</id>
    </interactant>
    <interactant intactId="EBI-20653342">
        <id>A0A178UFM8</id>
        <label>At5g51560</label>
    </interactant>
    <organismsDiffer>false</organismsDiffer>
    <experiments>3</experiments>
</comment>
<comment type="interaction">
    <interactant intactId="EBI-16924837">
        <id>Q9C8I6</id>
    </interactant>
    <interactant intactId="EBI-617138">
        <id>Q94F62</id>
        <label>BAK1</label>
    </interactant>
    <organismsDiffer>false</organismsDiffer>
    <experiments>2</experiments>
</comment>
<comment type="interaction">
    <interactant intactId="EBI-16924837">
        <id>Q9C8I6</id>
    </interactant>
    <interactant intactId="EBI-590903">
        <id>Q9ZWC8</id>
        <label>BRL1</label>
    </interactant>
    <organismsDiffer>false</organismsDiffer>
    <experiments>2</experiments>
</comment>
<comment type="interaction">
    <interactant intactId="EBI-16924837">
        <id>Q9C8I6</id>
    </interactant>
    <interactant intactId="EBI-20651413">
        <id>Q9LJF3</id>
        <label>BRL3</label>
    </interactant>
    <organismsDiffer>false</organismsDiffer>
    <experiments>2</experiments>
</comment>
<comment type="interaction">
    <interactant intactId="EBI-16924837">
        <id>Q9C8I6</id>
    </interactant>
    <interactant intactId="EBI-16940407">
        <id>Q42371</id>
        <label>ERECTA</label>
    </interactant>
    <organismsDiffer>false</organismsDiffer>
    <experiments>3</experiments>
</comment>
<comment type="interaction">
    <interactant intactId="EBI-16924837">
        <id>Q9C8I6</id>
    </interactant>
    <interactant intactId="EBI-16914248">
        <id>C0LGW6</id>
        <label>ERL1</label>
    </interactant>
    <organismsDiffer>false</organismsDiffer>
    <experiments>4</experiments>
</comment>
<comment type="interaction">
    <interactant intactId="EBI-16924837">
        <id>Q9C8I6</id>
    </interactant>
    <interactant intactId="EBI-16895926">
        <id>Q6XAT2</id>
        <label>ERL2</label>
    </interactant>
    <organismsDiffer>false</organismsDiffer>
    <experiments>3</experiments>
</comment>
<comment type="interaction">
    <interactant intactId="EBI-16924837">
        <id>Q9C8I6</id>
    </interactant>
    <interactant intactId="EBI-1799448">
        <id>Q9FL28</id>
        <label>FLS2</label>
    </interactant>
    <organismsDiffer>false</organismsDiffer>
    <experiments>2</experiments>
</comment>
<comment type="interaction">
    <interactant intactId="EBI-16924837">
        <id>Q9C8I6</id>
    </interactant>
    <interactant intactId="EBI-16924837">
        <id>Q9C8I6</id>
        <label>IOS1</label>
    </interactant>
    <organismsDiffer>false</organismsDiffer>
    <experiments>4</experiments>
</comment>
<comment type="interaction">
    <interactant intactId="EBI-16924837">
        <id>Q9C8I6</id>
    </interactant>
    <interactant intactId="EBI-16904988">
        <id>Q9C7S5</id>
        <label>PSY1R</label>
    </interactant>
    <organismsDiffer>false</organismsDiffer>
    <experiments>3</experiments>
</comment>
<comment type="interaction">
    <interactant intactId="EBI-16924837">
        <id>Q9C8I6</id>
    </interactant>
    <interactant intactId="EBI-1238953">
        <id>Q9ZRF9</id>
        <label>RPK1</label>
    </interactant>
    <organismsDiffer>false</organismsDiffer>
    <experiments>4</experiments>
</comment>
<comment type="interaction">
    <interactant intactId="EBI-16924837">
        <id>Q9C8I6</id>
    </interactant>
    <interactant intactId="EBI-1555537">
        <id>Q94AG2</id>
        <label>SERK1</label>
    </interactant>
    <organismsDiffer>false</organismsDiffer>
    <experiments>4</experiments>
</comment>
<comment type="interaction">
    <interactant intactId="EBI-16924837">
        <id>Q9C8I6</id>
    </interactant>
    <interactant intactId="EBI-6290483">
        <id>Q9SKG5</id>
        <label>SERK4</label>
    </interactant>
    <organismsDiffer>false</organismsDiffer>
    <experiments>4</experiments>
</comment>
<comment type="interaction">
    <interactant intactId="EBI-16924837">
        <id>Q9C8I6</id>
    </interactant>
    <interactant intactId="EBI-17072125">
        <id>Q8RWZ1</id>
        <label>SUB</label>
    </interactant>
    <organismsDiffer>false</organismsDiffer>
    <experiments>3</experiments>
</comment>
<comment type="subcellular location">
    <subcellularLocation>
        <location evidence="7">Cell membrane</location>
        <topology evidence="2">Single-pass membrane protein</topology>
    </subcellularLocation>
</comment>
<comment type="tissue specificity">
    <text evidence="6">Expressed in roots, cotyledons, leaves, flowers and siliques.</text>
</comment>
<comment type="developmental stage">
    <text evidence="6">Predominantly expressed in tissue with fates controlled by the phytohormone abscisic acid (ABA). In roots, expressed in the radicle emerging from the testa, in the elongation zones of roots, and in root cap border cells undergoing detachment. In hypocotyls, detected only during etiolation in the dark. In cotyledons and leaves, restricted to cells surrounding stomata. In reproductive organs, observed in the style after pollination, in the abscission zones of sepals and petals, in the transmitting tract of developing fruits, and in the abscission zones of mature siliques. Also present in pollen tubes.</text>
</comment>
<comment type="induction">
    <text evidence="5 6 7">Accumulates during infection by filamentous (hemi)biotrophic oomycetes (e.g. H.arabidopsidis and P.parasitica) and fungal (e.g. E.cruciferarum) pathogens, being locally expressed in cells surrounding the pathogens both at early and late stages of infection (PubMed:21711359, PubMed:25274985). Induced by microbe-associated molecular patterns (MAMPs) flg22 or elf18 (PubMed:27317676).</text>
</comment>
<comment type="disruption phenotype">
    <text evidence="5 6 7">Reduced infection by filamentous (hemi)biotrophic oomycetes (e.g. H.arabidopsidis and P.parasitica) and fungal (e.g. E.cruciferarum) pathogens, independently of plant defense mechanism (PubMed:21711359, PubMed:25274985). Hypersensitivity to abscisic acid (ABA), displaying enhanced ABA-mediated inhibition of seed germination, root elongation, and stomatal opening. Impaired repression of ABA-sensitive COLD REGULATED and RESISTANCE TO DESICCATION genes upon oomycete infection. No obvious modification of defense-related gene induction during pathogen attack (PubMed:25274985). Hypersusceptibility to the necrotrophic bacteria P.syringae. Defective pattern-triggered immunity (PTI) responses, delayed up-regulation of PTI marker genes, reduced callose deposition, and mitogen-activated protein kinase activation upon microbe-associated molecular patterns (MAMPs) treatment. Impaired beta-aminobutyric acid (BABA)-induced resistance and priming (PubMed:27317676).</text>
</comment>
<comment type="similarity">
    <text evidence="3">Belongs to the protein kinase superfamily. Ser/Thr protein kinase family.</text>
</comment>
<reference key="1">
    <citation type="journal article" date="2010" name="BMC Genomics">
        <title>Genome-wide cloning and sequence analysis of leucine-rich repeat receptor-like protein kinase genes in Arabidopsis thaliana.</title>
        <authorList>
            <person name="Gou X."/>
            <person name="He K."/>
            <person name="Yang H."/>
            <person name="Yuan T."/>
            <person name="Lin H."/>
            <person name="Clouse S.D."/>
            <person name="Li J."/>
        </authorList>
    </citation>
    <scope>NUCLEOTIDE SEQUENCE [MRNA]</scope>
    <source>
        <strain>cv. Columbia</strain>
    </source>
</reference>
<reference key="2">
    <citation type="journal article" date="2000" name="Nature">
        <title>Sequence and analysis of chromosome 1 of the plant Arabidopsis thaliana.</title>
        <authorList>
            <person name="Theologis A."/>
            <person name="Ecker J.R."/>
            <person name="Palm C.J."/>
            <person name="Federspiel N.A."/>
            <person name="Kaul S."/>
            <person name="White O."/>
            <person name="Alonso J."/>
            <person name="Altafi H."/>
            <person name="Araujo R."/>
            <person name="Bowman C.L."/>
            <person name="Brooks S.Y."/>
            <person name="Buehler E."/>
            <person name="Chan A."/>
            <person name="Chao Q."/>
            <person name="Chen H."/>
            <person name="Cheuk R.F."/>
            <person name="Chin C.W."/>
            <person name="Chung M.K."/>
            <person name="Conn L."/>
            <person name="Conway A.B."/>
            <person name="Conway A.R."/>
            <person name="Creasy T.H."/>
            <person name="Dewar K."/>
            <person name="Dunn P."/>
            <person name="Etgu P."/>
            <person name="Feldblyum T.V."/>
            <person name="Feng J.-D."/>
            <person name="Fong B."/>
            <person name="Fujii C.Y."/>
            <person name="Gill J.E."/>
            <person name="Goldsmith A.D."/>
            <person name="Haas B."/>
            <person name="Hansen N.F."/>
            <person name="Hughes B."/>
            <person name="Huizar L."/>
            <person name="Hunter J.L."/>
            <person name="Jenkins J."/>
            <person name="Johnson-Hopson C."/>
            <person name="Khan S."/>
            <person name="Khaykin E."/>
            <person name="Kim C.J."/>
            <person name="Koo H.L."/>
            <person name="Kremenetskaia I."/>
            <person name="Kurtz D.B."/>
            <person name="Kwan A."/>
            <person name="Lam B."/>
            <person name="Langin-Hooper S."/>
            <person name="Lee A."/>
            <person name="Lee J.M."/>
            <person name="Lenz C.A."/>
            <person name="Li J.H."/>
            <person name="Li Y.-P."/>
            <person name="Lin X."/>
            <person name="Liu S.X."/>
            <person name="Liu Z.A."/>
            <person name="Luros J.S."/>
            <person name="Maiti R."/>
            <person name="Marziali A."/>
            <person name="Militscher J."/>
            <person name="Miranda M."/>
            <person name="Nguyen M."/>
            <person name="Nierman W.C."/>
            <person name="Osborne B.I."/>
            <person name="Pai G."/>
            <person name="Peterson J."/>
            <person name="Pham P.K."/>
            <person name="Rizzo M."/>
            <person name="Rooney T."/>
            <person name="Rowley D."/>
            <person name="Sakano H."/>
            <person name="Salzberg S.L."/>
            <person name="Schwartz J.R."/>
            <person name="Shinn P."/>
            <person name="Southwick A.M."/>
            <person name="Sun H."/>
            <person name="Tallon L.J."/>
            <person name="Tambunga G."/>
            <person name="Toriumi M.J."/>
            <person name="Town C.D."/>
            <person name="Utterback T."/>
            <person name="Van Aken S."/>
            <person name="Vaysberg M."/>
            <person name="Vysotskaia V.S."/>
            <person name="Walker M."/>
            <person name="Wu D."/>
            <person name="Yu G."/>
            <person name="Fraser C.M."/>
            <person name="Venter J.C."/>
            <person name="Davis R.W."/>
        </authorList>
    </citation>
    <scope>NUCLEOTIDE SEQUENCE [LARGE SCALE GENOMIC DNA]</scope>
    <source>
        <strain>cv. Columbia</strain>
    </source>
</reference>
<reference key="3">
    <citation type="journal article" date="2017" name="Plant J.">
        <title>Araport11: a complete reannotation of the Arabidopsis thaliana reference genome.</title>
        <authorList>
            <person name="Cheng C.Y."/>
            <person name="Krishnakumar V."/>
            <person name="Chan A.P."/>
            <person name="Thibaud-Nissen F."/>
            <person name="Schobel S."/>
            <person name="Town C.D."/>
        </authorList>
    </citation>
    <scope>GENOME REANNOTATION</scope>
    <source>
        <strain>cv. Columbia</strain>
    </source>
</reference>
<reference key="4">
    <citation type="journal article" date="2002" name="Science">
        <title>Functional annotation of a full-length Arabidopsis cDNA collection.</title>
        <authorList>
            <person name="Seki M."/>
            <person name="Narusaka M."/>
            <person name="Kamiya A."/>
            <person name="Ishida J."/>
            <person name="Satou M."/>
            <person name="Sakurai T."/>
            <person name="Nakajima M."/>
            <person name="Enju A."/>
            <person name="Akiyama K."/>
            <person name="Oono Y."/>
            <person name="Muramatsu M."/>
            <person name="Hayashizaki Y."/>
            <person name="Kawai J."/>
            <person name="Carninci P."/>
            <person name="Itoh M."/>
            <person name="Ishii Y."/>
            <person name="Arakawa T."/>
            <person name="Shibata K."/>
            <person name="Shinagawa A."/>
            <person name="Shinozaki K."/>
        </authorList>
    </citation>
    <scope>NUCLEOTIDE SEQUENCE [LARGE SCALE MRNA]</scope>
    <source>
        <strain>cv. Columbia</strain>
    </source>
</reference>
<reference key="5">
    <citation type="journal article" date="2011" name="Plant Cell Environ.">
        <title>An Arabidopsis (malectin-like) leucine-rich repeat receptor-like kinase contributes to downy mildew disease.</title>
        <authorList>
            <person name="Hok S."/>
            <person name="Danchin E.G."/>
            <person name="Allasia V."/>
            <person name="Panabieres F."/>
            <person name="Attard A."/>
            <person name="Keller H."/>
        </authorList>
    </citation>
    <scope>FUNCTION</scope>
    <scope>DISRUPTION PHENOTYPE</scope>
    <scope>INDUCTION BY H.ARABIDOPSIDIS</scope>
    <source>
        <strain>cv. Columbia</strain>
        <strain>cv. Landsberg erecta</strain>
        <strain>cv. Wassilewskija</strain>
    </source>
</reference>
<reference key="6">
    <citation type="journal article" date="2014" name="Plant Physiol.">
        <title>The receptor kinase IMPAIRED OOMYCETE SUSCEPTIBILITY1 attenuates abscisic acid responses in Arabidopsis.</title>
        <authorList>
            <person name="Hok S."/>
            <person name="Allasia V."/>
            <person name="Andrio E."/>
            <person name="Naessens E."/>
            <person name="Ribes E."/>
            <person name="Panabieres F."/>
            <person name="Attard A."/>
            <person name="Ris N."/>
            <person name="Clement M."/>
            <person name="Barlet X."/>
            <person name="Marco Y."/>
            <person name="Grill E."/>
            <person name="Eichmann R."/>
            <person name="Weis C."/>
            <person name="Hueckelhoven R."/>
            <person name="Ammon A."/>
            <person name="Ludwig-Mueller J."/>
            <person name="Voll L.M."/>
            <person name="Keller H."/>
        </authorList>
    </citation>
    <scope>FUNCTION</scope>
    <scope>DISRUPTION PHENOTYPE</scope>
    <scope>TISSUE SPECIFICITY</scope>
    <scope>DEVELOPMENTAL STAGE</scope>
    <scope>INDUCTION BY E.CRUCIFERARUM; H.ARABIDOPSIDIS AND P.PARASITICA</scope>
    <source>
        <strain>cv. Columbia</strain>
        <strain>cv. Landsberg erecta</strain>
    </source>
</reference>
<reference key="7">
    <citation type="journal article" date="2016" name="Plant Cell">
        <title>The Arabidopsis malectin-like/LRR-RLK IOS1 is critical for BAK1-dependent and BAK1-independent pattern-triggered immunity.</title>
        <authorList>
            <person name="Yeh Y.-H."/>
            <person name="Panzeri D."/>
            <person name="Kadota Y."/>
            <person name="Huang Y.-C."/>
            <person name="Huang P.-Y."/>
            <person name="Tao C.-N."/>
            <person name="Roux M."/>
            <person name="Chien H.-C."/>
            <person name="Chin T.-C."/>
            <person name="Chu P.-W."/>
            <person name="Zipfel C."/>
            <person name="Zimmerli L."/>
        </authorList>
    </citation>
    <scope>FUNCTION</scope>
    <scope>DISRUPTION PHENOTYPE</scope>
    <scope>INTERACTION WITH BAK1; FLS2; CERK1 AND EFR</scope>
    <scope>INDUCTION BY FLG22 OR ELF18</scope>
    <scope>SUBCELLULAR LOCATION</scope>
    <source>
        <strain>cv. Columbia</strain>
        <strain>cv. Landsberg erecta</strain>
    </source>
</reference>
<accession>Q9C8I6</accession>
<accession>Q7FL10</accession>
<dbReference type="EC" id="2.7.11.-" evidence="3"/>
<dbReference type="EMBL" id="FJ708650">
    <property type="protein sequence ID" value="ACN59246.1"/>
    <property type="molecule type" value="mRNA"/>
</dbReference>
<dbReference type="EMBL" id="AC025294">
    <property type="protein sequence ID" value="AAG50874.1"/>
    <property type="molecule type" value="Genomic_DNA"/>
</dbReference>
<dbReference type="EMBL" id="CP002684">
    <property type="protein sequence ID" value="AEE32717.1"/>
    <property type="molecule type" value="Genomic_DNA"/>
</dbReference>
<dbReference type="EMBL" id="AK118836">
    <property type="protein sequence ID" value="BAC43425.2"/>
    <property type="molecule type" value="mRNA"/>
</dbReference>
<dbReference type="PIR" id="B96557">
    <property type="entry name" value="B96557"/>
</dbReference>
<dbReference type="RefSeq" id="NP_175591.1">
    <property type="nucleotide sequence ID" value="NM_104059.3"/>
</dbReference>
<dbReference type="SMR" id="Q9C8I6"/>
<dbReference type="FunCoup" id="Q9C8I6">
    <property type="interactions" value="130"/>
</dbReference>
<dbReference type="IntAct" id="Q9C8I6">
    <property type="interactions" value="39"/>
</dbReference>
<dbReference type="STRING" id="3702.Q9C8I6"/>
<dbReference type="GlyCosmos" id="Q9C8I6">
    <property type="glycosylation" value="14 sites, No reported glycans"/>
</dbReference>
<dbReference type="GlyGen" id="Q9C8I6">
    <property type="glycosylation" value="14 sites"/>
</dbReference>
<dbReference type="iPTMnet" id="Q9C8I6"/>
<dbReference type="PaxDb" id="3702-AT1G51800.1"/>
<dbReference type="ProteomicsDB" id="228844"/>
<dbReference type="EnsemblPlants" id="AT1G51800.1">
    <property type="protein sequence ID" value="AT1G51800.1"/>
    <property type="gene ID" value="AT1G51800"/>
</dbReference>
<dbReference type="GeneID" id="841606"/>
<dbReference type="Gramene" id="AT1G51800.1">
    <property type="protein sequence ID" value="AT1G51800.1"/>
    <property type="gene ID" value="AT1G51800"/>
</dbReference>
<dbReference type="KEGG" id="ath:AT1G51800"/>
<dbReference type="Araport" id="AT1G51800"/>
<dbReference type="TAIR" id="AT1G51800">
    <property type="gene designation" value="IOS1"/>
</dbReference>
<dbReference type="eggNOG" id="ENOG502QQCZ">
    <property type="taxonomic scope" value="Eukaryota"/>
</dbReference>
<dbReference type="HOGENOM" id="CLU_000288_41_1_1"/>
<dbReference type="InParanoid" id="Q9C8I6"/>
<dbReference type="OMA" id="ANKIDWE"/>
<dbReference type="PhylomeDB" id="Q9C8I6"/>
<dbReference type="PRO" id="PR:Q9C8I6"/>
<dbReference type="Proteomes" id="UP000006548">
    <property type="component" value="Chromosome 1"/>
</dbReference>
<dbReference type="ExpressionAtlas" id="Q9C8I6">
    <property type="expression patterns" value="baseline and differential"/>
</dbReference>
<dbReference type="GO" id="GO:0005886">
    <property type="term" value="C:plasma membrane"/>
    <property type="evidence" value="ECO:0000314"/>
    <property type="project" value="UniProtKB"/>
</dbReference>
<dbReference type="GO" id="GO:0090406">
    <property type="term" value="C:pollen tube"/>
    <property type="evidence" value="ECO:0000314"/>
    <property type="project" value="TAIR"/>
</dbReference>
<dbReference type="GO" id="GO:0005524">
    <property type="term" value="F:ATP binding"/>
    <property type="evidence" value="ECO:0007669"/>
    <property type="project" value="UniProtKB-KW"/>
</dbReference>
<dbReference type="GO" id="GO:0042802">
    <property type="term" value="F:identical protein binding"/>
    <property type="evidence" value="ECO:0000353"/>
    <property type="project" value="IntAct"/>
</dbReference>
<dbReference type="GO" id="GO:0042803">
    <property type="term" value="F:protein homodimerization activity"/>
    <property type="evidence" value="ECO:0000314"/>
    <property type="project" value="UniProtKB"/>
</dbReference>
<dbReference type="GO" id="GO:0004674">
    <property type="term" value="F:protein serine/threonine kinase activity"/>
    <property type="evidence" value="ECO:0007669"/>
    <property type="project" value="UniProtKB-KW"/>
</dbReference>
<dbReference type="GO" id="GO:0009738">
    <property type="term" value="P:abscisic acid-activated signaling pathway"/>
    <property type="evidence" value="ECO:0007669"/>
    <property type="project" value="UniProtKB-KW"/>
</dbReference>
<dbReference type="GO" id="GO:0002229">
    <property type="term" value="P:defense response to oomycetes"/>
    <property type="evidence" value="ECO:0000315"/>
    <property type="project" value="TAIR"/>
</dbReference>
<dbReference type="GO" id="GO:0009788">
    <property type="term" value="P:negative regulation of abscisic acid-activated signaling pathway"/>
    <property type="evidence" value="ECO:0000315"/>
    <property type="project" value="TAIR"/>
</dbReference>
<dbReference type="GO" id="GO:1902289">
    <property type="term" value="P:negative regulation of defense response to oomycetes"/>
    <property type="evidence" value="ECO:0000315"/>
    <property type="project" value="UniProtKB"/>
</dbReference>
<dbReference type="GO" id="GO:1900426">
    <property type="term" value="P:positive regulation of defense response to bacterium"/>
    <property type="evidence" value="ECO:0000315"/>
    <property type="project" value="UniProtKB"/>
</dbReference>
<dbReference type="GO" id="GO:2000071">
    <property type="term" value="P:regulation of defense response by callose deposition"/>
    <property type="evidence" value="ECO:0000315"/>
    <property type="project" value="UniProtKB"/>
</dbReference>
<dbReference type="GO" id="GO:1900150">
    <property type="term" value="P:regulation of defense response to fungus"/>
    <property type="evidence" value="ECO:0000315"/>
    <property type="project" value="UniProtKB"/>
</dbReference>
<dbReference type="GO" id="GO:0010200">
    <property type="term" value="P:response to chitin"/>
    <property type="evidence" value="ECO:0000315"/>
    <property type="project" value="UniProtKB"/>
</dbReference>
<dbReference type="GO" id="GO:0009620">
    <property type="term" value="P:response to fungus"/>
    <property type="evidence" value="ECO:0000270"/>
    <property type="project" value="UniProtKB"/>
</dbReference>
<dbReference type="GO" id="GO:0002237">
    <property type="term" value="P:response to molecule of bacterial origin"/>
    <property type="evidence" value="ECO:0000315"/>
    <property type="project" value="UniProtKB"/>
</dbReference>
<dbReference type="GO" id="GO:0002238">
    <property type="term" value="P:response to molecule of fungal origin"/>
    <property type="evidence" value="ECO:0000315"/>
    <property type="project" value="UniProtKB"/>
</dbReference>
<dbReference type="GO" id="GO:0002239">
    <property type="term" value="P:response to oomycetes"/>
    <property type="evidence" value="ECO:0000270"/>
    <property type="project" value="UniProtKB"/>
</dbReference>
<dbReference type="CDD" id="cd14066">
    <property type="entry name" value="STKc_IRAK"/>
    <property type="match status" value="1"/>
</dbReference>
<dbReference type="FunFam" id="3.80.10.10:FF:000129">
    <property type="entry name" value="Leucine-rich repeat receptor-like kinase"/>
    <property type="match status" value="1"/>
</dbReference>
<dbReference type="FunFam" id="3.30.200.20:FF:000394">
    <property type="entry name" value="Leucine-rich repeat receptor-like protein kinase"/>
    <property type="match status" value="1"/>
</dbReference>
<dbReference type="FunFam" id="1.10.510.10:FF:000146">
    <property type="entry name" value="LRR receptor-like serine/threonine-protein kinase IOS1"/>
    <property type="match status" value="1"/>
</dbReference>
<dbReference type="Gene3D" id="3.30.200.20">
    <property type="entry name" value="Phosphorylase Kinase, domain 1"/>
    <property type="match status" value="1"/>
</dbReference>
<dbReference type="Gene3D" id="3.80.10.10">
    <property type="entry name" value="Ribonuclease Inhibitor"/>
    <property type="match status" value="1"/>
</dbReference>
<dbReference type="Gene3D" id="1.10.510.10">
    <property type="entry name" value="Transferase(Phosphotransferase) domain 1"/>
    <property type="match status" value="1"/>
</dbReference>
<dbReference type="InterPro" id="IPR011009">
    <property type="entry name" value="Kinase-like_dom_sf"/>
</dbReference>
<dbReference type="InterPro" id="IPR001611">
    <property type="entry name" value="Leu-rich_rpt"/>
</dbReference>
<dbReference type="InterPro" id="IPR032675">
    <property type="entry name" value="LRR_dom_sf"/>
</dbReference>
<dbReference type="InterPro" id="IPR024788">
    <property type="entry name" value="Malectin-like_Carb-bd_dom"/>
</dbReference>
<dbReference type="InterPro" id="IPR000719">
    <property type="entry name" value="Prot_kinase_dom"/>
</dbReference>
<dbReference type="InterPro" id="IPR017441">
    <property type="entry name" value="Protein_kinase_ATP_BS"/>
</dbReference>
<dbReference type="InterPro" id="IPR008271">
    <property type="entry name" value="Ser/Thr_kinase_AS"/>
</dbReference>
<dbReference type="PANTHER" id="PTHR45631:SF144">
    <property type="entry name" value="LRR RECEPTOR-LIKE SERINE_THREONINE-KINASE-RELATED"/>
    <property type="match status" value="1"/>
</dbReference>
<dbReference type="PANTHER" id="PTHR45631">
    <property type="entry name" value="OS07G0107800 PROTEIN-RELATED"/>
    <property type="match status" value="1"/>
</dbReference>
<dbReference type="Pfam" id="PF13855">
    <property type="entry name" value="LRR_8"/>
    <property type="match status" value="1"/>
</dbReference>
<dbReference type="Pfam" id="PF12819">
    <property type="entry name" value="Malectin_like"/>
    <property type="match status" value="1"/>
</dbReference>
<dbReference type="Pfam" id="PF00069">
    <property type="entry name" value="Pkinase"/>
    <property type="match status" value="1"/>
</dbReference>
<dbReference type="SMART" id="SM00220">
    <property type="entry name" value="S_TKc"/>
    <property type="match status" value="1"/>
</dbReference>
<dbReference type="SUPFAM" id="SSF52058">
    <property type="entry name" value="L domain-like"/>
    <property type="match status" value="1"/>
</dbReference>
<dbReference type="SUPFAM" id="SSF56112">
    <property type="entry name" value="Protein kinase-like (PK-like)"/>
    <property type="match status" value="1"/>
</dbReference>
<dbReference type="PROSITE" id="PS00107">
    <property type="entry name" value="PROTEIN_KINASE_ATP"/>
    <property type="match status" value="1"/>
</dbReference>
<dbReference type="PROSITE" id="PS50011">
    <property type="entry name" value="PROTEIN_KINASE_DOM"/>
    <property type="match status" value="1"/>
</dbReference>
<dbReference type="PROSITE" id="PS00108">
    <property type="entry name" value="PROTEIN_KINASE_ST"/>
    <property type="match status" value="1"/>
</dbReference>
<protein>
    <recommendedName>
        <fullName evidence="8">LRR receptor-like serine/threonine-protein kinase IOS1</fullName>
        <ecNumber evidence="3">2.7.11.-</ecNumber>
    </recommendedName>
    <alternativeName>
        <fullName evidence="8">Protein IMPAIRED OOMYCETE SUSCEPTIBILITY 1</fullName>
    </alternativeName>
</protein>
<proteinExistence type="evidence at protein level"/>
<name>IOS1_ARATH</name>